<comment type="similarity">
    <text evidence="1">Belongs to the UPF0319 family.</text>
</comment>
<sequence>MKTGALATFLALCLPATVFATTLRLSNEVDLLVLDGKKVSSSLLRGAESIELENGPHQLVFRVEKTIRLPGNEERLYISPPLVISFDTQLISQVNFQLPRLENEREASHFNAAPRLALLDGDAMPIPVKLDILAITSTAKVVDYEIETERYNKSAKRASLPQFATMMADDSTLLSDVSELDTVPPQSQTLTEQRLKYWFRLADPQTRHHFLQWAEKQPPS</sequence>
<reference key="1">
    <citation type="journal article" date="2011" name="J. Bacteriol.">
        <title>Comparative genomics of 28 Salmonella enterica isolates: evidence for CRISPR-mediated adaptive sublineage evolution.</title>
        <authorList>
            <person name="Fricke W.F."/>
            <person name="Mammel M.K."/>
            <person name="McDermott P.F."/>
            <person name="Tartera C."/>
            <person name="White D.G."/>
            <person name="Leclerc J.E."/>
            <person name="Ravel J."/>
            <person name="Cebula T.A."/>
        </authorList>
    </citation>
    <scope>NUCLEOTIDE SEQUENCE [LARGE SCALE GENOMIC DNA]</scope>
    <source>
        <strain>SL476</strain>
    </source>
</reference>
<proteinExistence type="inferred from homology"/>
<accession>B4TE04</accession>
<keyword id="KW-0732">Signal</keyword>
<evidence type="ECO:0000255" key="1">
    <source>
        <dbReference type="HAMAP-Rule" id="MF_00789"/>
    </source>
</evidence>
<feature type="signal peptide" evidence="1">
    <location>
        <begin position="1"/>
        <end position="20"/>
    </location>
</feature>
<feature type="chain" id="PRO_1000200494" description="UPF0319 protein YccT">
    <location>
        <begin position="21"/>
        <end position="220"/>
    </location>
</feature>
<dbReference type="EMBL" id="CP001120">
    <property type="protein sequence ID" value="ACF68647.1"/>
    <property type="molecule type" value="Genomic_DNA"/>
</dbReference>
<dbReference type="RefSeq" id="WP_000847716.1">
    <property type="nucleotide sequence ID" value="NC_011083.1"/>
</dbReference>
<dbReference type="KEGG" id="seh:SeHA_C1186"/>
<dbReference type="HOGENOM" id="CLU_073782_2_0_6"/>
<dbReference type="Proteomes" id="UP000001866">
    <property type="component" value="Chromosome"/>
</dbReference>
<dbReference type="HAMAP" id="MF_00789">
    <property type="entry name" value="UPF0319"/>
    <property type="match status" value="1"/>
</dbReference>
<dbReference type="InterPro" id="IPR018635">
    <property type="entry name" value="UPF0319"/>
</dbReference>
<dbReference type="NCBIfam" id="NF047712">
    <property type="entry name" value="CrliSynInhib"/>
    <property type="match status" value="1"/>
</dbReference>
<dbReference type="NCBIfam" id="NF002967">
    <property type="entry name" value="PRK03641.1"/>
    <property type="match status" value="1"/>
</dbReference>
<dbReference type="PANTHER" id="PTHR38108">
    <property type="entry name" value="UPF0319 PROTEIN YCCT"/>
    <property type="match status" value="1"/>
</dbReference>
<dbReference type="PANTHER" id="PTHR38108:SF1">
    <property type="entry name" value="UPF0319 PROTEIN YCCT"/>
    <property type="match status" value="1"/>
</dbReference>
<dbReference type="Pfam" id="PF09829">
    <property type="entry name" value="DUF2057"/>
    <property type="match status" value="1"/>
</dbReference>
<protein>
    <recommendedName>
        <fullName evidence="1">UPF0319 protein YccT</fullName>
    </recommendedName>
</protein>
<gene>
    <name evidence="1" type="primary">yccT</name>
    <name type="ordered locus">SeHA_C1186</name>
</gene>
<organism>
    <name type="scientific">Salmonella heidelberg (strain SL476)</name>
    <dbReference type="NCBI Taxonomy" id="454169"/>
    <lineage>
        <taxon>Bacteria</taxon>
        <taxon>Pseudomonadati</taxon>
        <taxon>Pseudomonadota</taxon>
        <taxon>Gammaproteobacteria</taxon>
        <taxon>Enterobacterales</taxon>
        <taxon>Enterobacteriaceae</taxon>
        <taxon>Salmonella</taxon>
    </lineage>
</organism>
<name>YCCT_SALHS</name>